<comment type="function">
    <text evidence="1">Catalyzes the reversible transfer of the terminal phosphate group between ATP and AMP. Plays an important role in cellular energy homeostasis and in adenine nucleotide metabolism.</text>
</comment>
<comment type="catalytic activity">
    <reaction evidence="1">
        <text>AMP + ATP = 2 ADP</text>
        <dbReference type="Rhea" id="RHEA:12973"/>
        <dbReference type="ChEBI" id="CHEBI:30616"/>
        <dbReference type="ChEBI" id="CHEBI:456215"/>
        <dbReference type="ChEBI" id="CHEBI:456216"/>
        <dbReference type="EC" id="2.7.4.3"/>
    </reaction>
</comment>
<comment type="pathway">
    <text evidence="1">Purine metabolism; AMP biosynthesis via salvage pathway; AMP from ADP: step 1/1.</text>
</comment>
<comment type="subunit">
    <text evidence="1">Monomer.</text>
</comment>
<comment type="subcellular location">
    <subcellularLocation>
        <location evidence="1">Cytoplasm</location>
    </subcellularLocation>
</comment>
<comment type="domain">
    <text evidence="1">Consists of three domains, a large central CORE domain and two small peripheral domains, NMPbind and LID, which undergo movements during catalysis. The LID domain closes over the site of phosphoryl transfer upon ATP binding. Assembling and dissambling the active center during each catalytic cycle provides an effective means to prevent ATP hydrolysis. Some bacteria have evolved a zinc-coordinating structure that stabilizes the LID domain.</text>
</comment>
<comment type="similarity">
    <text evidence="1">Belongs to the adenylate kinase family.</text>
</comment>
<proteinExistence type="inferred from homology"/>
<keyword id="KW-0067">ATP-binding</keyword>
<keyword id="KW-0963">Cytoplasm</keyword>
<keyword id="KW-0418">Kinase</keyword>
<keyword id="KW-0479">Metal-binding</keyword>
<keyword id="KW-0545">Nucleotide biosynthesis</keyword>
<keyword id="KW-0547">Nucleotide-binding</keyword>
<keyword id="KW-1185">Reference proteome</keyword>
<keyword id="KW-0808">Transferase</keyword>
<keyword id="KW-0862">Zinc</keyword>
<protein>
    <recommendedName>
        <fullName evidence="1">Adenylate kinase</fullName>
        <shortName evidence="1">AK</shortName>
        <ecNumber evidence="1">2.7.4.3</ecNumber>
    </recommendedName>
    <alternativeName>
        <fullName evidence="1">ATP-AMP transphosphorylase</fullName>
    </alternativeName>
    <alternativeName>
        <fullName evidence="1">ATP:AMP phosphotransferase</fullName>
    </alternativeName>
    <alternativeName>
        <fullName evidence="1">Adenylate monophosphate kinase</fullName>
    </alternativeName>
</protein>
<reference key="1">
    <citation type="journal article" date="2009" name="Appl. Environ. Microbiol.">
        <title>Genomic analysis of 'Elusimicrobium minutum,' the first cultivated representative of the phylum 'Elusimicrobia' (formerly termite group 1).</title>
        <authorList>
            <person name="Herlemann D.P.R."/>
            <person name="Geissinger O."/>
            <person name="Ikeda-Ohtsubo W."/>
            <person name="Kunin V."/>
            <person name="Sun H."/>
            <person name="Lapidus A."/>
            <person name="Hugenholtz P."/>
            <person name="Brune A."/>
        </authorList>
    </citation>
    <scope>NUCLEOTIDE SEQUENCE [LARGE SCALE GENOMIC DNA]</scope>
    <source>
        <strain>Pei191</strain>
    </source>
</reference>
<sequence length="214" mass="23933">MIIVLLGAPGAGKGTQSVLVAEKYGLKHISTGDLLREEIANNTELGKQAKKLIDGGNLVPDEMILGLLKNAFLNRGKGVVLDGFPRTLSQAEMMHPIVKGLAEKLSAVINIKLSEDEITQRIVLRRQCKNCGNIFNLRFIKNFDGKCPKCGSTDIYQRADDNEESAKNRINVYHSQTEPVVGFYKNKTYYKEVDGSKNKEEVFEEISKFINRKK</sequence>
<organism>
    <name type="scientific">Elusimicrobium minutum (strain Pei191)</name>
    <dbReference type="NCBI Taxonomy" id="445932"/>
    <lineage>
        <taxon>Bacteria</taxon>
        <taxon>Pseudomonadati</taxon>
        <taxon>Elusimicrobiota</taxon>
        <taxon>Elusimicrobia</taxon>
        <taxon>Elusimicrobiales</taxon>
        <taxon>Elusimicrobiaceae</taxon>
        <taxon>Elusimicrobium</taxon>
    </lineage>
</organism>
<name>KAD_ELUMP</name>
<gene>
    <name evidence="1" type="primary">adk</name>
    <name type="ordered locus">Emin_1398</name>
</gene>
<evidence type="ECO:0000255" key="1">
    <source>
        <dbReference type="HAMAP-Rule" id="MF_00235"/>
    </source>
</evidence>
<dbReference type="EC" id="2.7.4.3" evidence="1"/>
<dbReference type="EMBL" id="CP001055">
    <property type="protein sequence ID" value="ACC98947.1"/>
    <property type="molecule type" value="Genomic_DNA"/>
</dbReference>
<dbReference type="RefSeq" id="WP_012415562.1">
    <property type="nucleotide sequence ID" value="NC_010644.1"/>
</dbReference>
<dbReference type="SMR" id="B2KEK1"/>
<dbReference type="STRING" id="445932.Emin_1398"/>
<dbReference type="KEGG" id="emi:Emin_1398"/>
<dbReference type="HOGENOM" id="CLU_032354_1_2_0"/>
<dbReference type="OrthoDB" id="9805030at2"/>
<dbReference type="UniPathway" id="UPA00588">
    <property type="reaction ID" value="UER00649"/>
</dbReference>
<dbReference type="Proteomes" id="UP000001029">
    <property type="component" value="Chromosome"/>
</dbReference>
<dbReference type="GO" id="GO:0005737">
    <property type="term" value="C:cytoplasm"/>
    <property type="evidence" value="ECO:0007669"/>
    <property type="project" value="UniProtKB-SubCell"/>
</dbReference>
<dbReference type="GO" id="GO:0004017">
    <property type="term" value="F:adenylate kinase activity"/>
    <property type="evidence" value="ECO:0007669"/>
    <property type="project" value="UniProtKB-UniRule"/>
</dbReference>
<dbReference type="GO" id="GO:0005524">
    <property type="term" value="F:ATP binding"/>
    <property type="evidence" value="ECO:0007669"/>
    <property type="project" value="UniProtKB-UniRule"/>
</dbReference>
<dbReference type="GO" id="GO:0008270">
    <property type="term" value="F:zinc ion binding"/>
    <property type="evidence" value="ECO:0007669"/>
    <property type="project" value="UniProtKB-UniRule"/>
</dbReference>
<dbReference type="GO" id="GO:0044209">
    <property type="term" value="P:AMP salvage"/>
    <property type="evidence" value="ECO:0007669"/>
    <property type="project" value="UniProtKB-UniRule"/>
</dbReference>
<dbReference type="CDD" id="cd01428">
    <property type="entry name" value="ADK"/>
    <property type="match status" value="1"/>
</dbReference>
<dbReference type="FunFam" id="3.40.50.300:FF:000106">
    <property type="entry name" value="Adenylate kinase mitochondrial"/>
    <property type="match status" value="1"/>
</dbReference>
<dbReference type="Gene3D" id="3.40.50.300">
    <property type="entry name" value="P-loop containing nucleotide triphosphate hydrolases"/>
    <property type="match status" value="1"/>
</dbReference>
<dbReference type="HAMAP" id="MF_00235">
    <property type="entry name" value="Adenylate_kinase_Adk"/>
    <property type="match status" value="1"/>
</dbReference>
<dbReference type="InterPro" id="IPR006259">
    <property type="entry name" value="Adenyl_kin_sub"/>
</dbReference>
<dbReference type="InterPro" id="IPR000850">
    <property type="entry name" value="Adenylat/UMP-CMP_kin"/>
</dbReference>
<dbReference type="InterPro" id="IPR033690">
    <property type="entry name" value="Adenylat_kinase_CS"/>
</dbReference>
<dbReference type="InterPro" id="IPR007862">
    <property type="entry name" value="Adenylate_kinase_lid-dom"/>
</dbReference>
<dbReference type="InterPro" id="IPR027417">
    <property type="entry name" value="P-loop_NTPase"/>
</dbReference>
<dbReference type="NCBIfam" id="TIGR01351">
    <property type="entry name" value="adk"/>
    <property type="match status" value="1"/>
</dbReference>
<dbReference type="NCBIfam" id="NF001381">
    <property type="entry name" value="PRK00279.1-3"/>
    <property type="match status" value="1"/>
</dbReference>
<dbReference type="NCBIfam" id="NF011100">
    <property type="entry name" value="PRK14527.1"/>
    <property type="match status" value="1"/>
</dbReference>
<dbReference type="PANTHER" id="PTHR23359">
    <property type="entry name" value="NUCLEOTIDE KINASE"/>
    <property type="match status" value="1"/>
</dbReference>
<dbReference type="Pfam" id="PF00406">
    <property type="entry name" value="ADK"/>
    <property type="match status" value="1"/>
</dbReference>
<dbReference type="Pfam" id="PF05191">
    <property type="entry name" value="ADK_lid"/>
    <property type="match status" value="1"/>
</dbReference>
<dbReference type="PRINTS" id="PR00094">
    <property type="entry name" value="ADENYLTKNASE"/>
</dbReference>
<dbReference type="SUPFAM" id="SSF52540">
    <property type="entry name" value="P-loop containing nucleoside triphosphate hydrolases"/>
    <property type="match status" value="1"/>
</dbReference>
<dbReference type="PROSITE" id="PS00113">
    <property type="entry name" value="ADENYLATE_KINASE"/>
    <property type="match status" value="1"/>
</dbReference>
<accession>B2KEK1</accession>
<feature type="chain" id="PRO_1000100561" description="Adenylate kinase">
    <location>
        <begin position="1"/>
        <end position="214"/>
    </location>
</feature>
<feature type="region of interest" description="NMP" evidence="1">
    <location>
        <begin position="30"/>
        <end position="59"/>
    </location>
</feature>
<feature type="region of interest" description="LID" evidence="1">
    <location>
        <begin position="124"/>
        <end position="161"/>
    </location>
</feature>
<feature type="binding site" evidence="1">
    <location>
        <begin position="10"/>
        <end position="15"/>
    </location>
    <ligand>
        <name>ATP</name>
        <dbReference type="ChEBI" id="CHEBI:30616"/>
    </ligand>
</feature>
<feature type="binding site" evidence="1">
    <location>
        <position position="31"/>
    </location>
    <ligand>
        <name>AMP</name>
        <dbReference type="ChEBI" id="CHEBI:456215"/>
    </ligand>
</feature>
<feature type="binding site" evidence="1">
    <location>
        <position position="36"/>
    </location>
    <ligand>
        <name>AMP</name>
        <dbReference type="ChEBI" id="CHEBI:456215"/>
    </ligand>
</feature>
<feature type="binding site" evidence="1">
    <location>
        <begin position="57"/>
        <end position="59"/>
    </location>
    <ligand>
        <name>AMP</name>
        <dbReference type="ChEBI" id="CHEBI:456215"/>
    </ligand>
</feature>
<feature type="binding site" evidence="1">
    <location>
        <begin position="83"/>
        <end position="86"/>
    </location>
    <ligand>
        <name>AMP</name>
        <dbReference type="ChEBI" id="CHEBI:456215"/>
    </ligand>
</feature>
<feature type="binding site" evidence="1">
    <location>
        <position position="90"/>
    </location>
    <ligand>
        <name>AMP</name>
        <dbReference type="ChEBI" id="CHEBI:456215"/>
    </ligand>
</feature>
<feature type="binding site" evidence="1">
    <location>
        <position position="125"/>
    </location>
    <ligand>
        <name>ATP</name>
        <dbReference type="ChEBI" id="CHEBI:30616"/>
    </ligand>
</feature>
<feature type="binding site" evidence="1">
    <location>
        <position position="128"/>
    </location>
    <ligand>
        <name>Zn(2+)</name>
        <dbReference type="ChEBI" id="CHEBI:29105"/>
        <note>structural</note>
    </ligand>
</feature>
<feature type="binding site" evidence="1">
    <location>
        <position position="131"/>
    </location>
    <ligand>
        <name>Zn(2+)</name>
        <dbReference type="ChEBI" id="CHEBI:29105"/>
        <note>structural</note>
    </ligand>
</feature>
<feature type="binding site" evidence="1">
    <location>
        <begin position="134"/>
        <end position="135"/>
    </location>
    <ligand>
        <name>ATP</name>
        <dbReference type="ChEBI" id="CHEBI:30616"/>
    </ligand>
</feature>
<feature type="binding site" evidence="1">
    <location>
        <position position="147"/>
    </location>
    <ligand>
        <name>Zn(2+)</name>
        <dbReference type="ChEBI" id="CHEBI:29105"/>
        <note>structural</note>
    </ligand>
</feature>
<feature type="binding site" evidence="1">
    <location>
        <position position="150"/>
    </location>
    <ligand>
        <name>Zn(2+)</name>
        <dbReference type="ChEBI" id="CHEBI:29105"/>
        <note>structural</note>
    </ligand>
</feature>
<feature type="binding site" evidence="1">
    <location>
        <position position="158"/>
    </location>
    <ligand>
        <name>AMP</name>
        <dbReference type="ChEBI" id="CHEBI:456215"/>
    </ligand>
</feature>
<feature type="binding site" evidence="1">
    <location>
        <position position="169"/>
    </location>
    <ligand>
        <name>AMP</name>
        <dbReference type="ChEBI" id="CHEBI:456215"/>
    </ligand>
</feature>
<feature type="binding site" evidence="1">
    <location>
        <position position="197"/>
    </location>
    <ligand>
        <name>ATP</name>
        <dbReference type="ChEBI" id="CHEBI:30616"/>
    </ligand>
</feature>